<evidence type="ECO:0000250" key="1">
    <source>
        <dbReference type="UniProtKB" id="P56714"/>
    </source>
</evidence>
<evidence type="ECO:0000269" key="2">
    <source>
    </source>
</evidence>
<evidence type="ECO:0000269" key="3">
    <source ref="2"/>
</evidence>
<evidence type="ECO:0000303" key="4">
    <source>
    </source>
</evidence>
<evidence type="ECO:0000305" key="5"/>
<keyword id="KW-0903">Direct protein sequencing</keyword>
<keyword id="KW-1015">Disulfide bond</keyword>
<keyword id="KW-0872">Ion channel impairing toxin</keyword>
<keyword id="KW-0960">Knottin</keyword>
<keyword id="KW-0528">Neurotoxin</keyword>
<keyword id="KW-0964">Secreted</keyword>
<keyword id="KW-0800">Toxin</keyword>
<keyword id="KW-0738">Voltage-gated sodium channel impairing toxin</keyword>
<accession>P85506</accession>
<name>TXHM2_HERML</name>
<comment type="function">
    <text evidence="2 3">Blocks the Nav1.2/SCN2A, Nav1.4/SCN4A, Nav1.5/SCN5A and Nav1.6/SCN8A sodium channels. Shows a slight preference for the Nav1.2 and Nav1.4 channels. Reduces the peak amplitude of the sodium current and negatively shifts the steady-state inactivation process. Does not shift the threshold potential of activation or the voltage corresponding to maximal current. Does not change the reversal potential of the sodium current. May act on site 1 of the receptor.</text>
</comment>
<comment type="subcellular location">
    <subcellularLocation>
        <location evidence="2">Secreted</location>
    </subcellularLocation>
</comment>
<comment type="tissue specificity">
    <text evidence="5">Expressed by the venom gland.</text>
</comment>
<comment type="domain">
    <text evidence="1">The presence of a 'disulfide through disulfide knot' structurally defines this protein as a knottin.</text>
</comment>
<comment type="PTM">
    <text>Contains 3 disulfide bonds.</text>
</comment>
<comment type="mass spectrometry"/>
<comment type="miscellaneous">
    <text>Negative results: does not inhibit the sodium channel Nav1.8/SCN10A.</text>
</comment>
<comment type="similarity">
    <text evidence="5">Belongs to the neurotoxin 19 (CSTX) family.</text>
</comment>
<organism>
    <name type="scientific">Heriaeus mellotteei</name>
    <name type="common">Crab spider</name>
    <name type="synonym">Heriaeus oblongus</name>
    <dbReference type="NCBI Taxonomy" id="2337432"/>
    <lineage>
        <taxon>Eukaryota</taxon>
        <taxon>Metazoa</taxon>
        <taxon>Ecdysozoa</taxon>
        <taxon>Arthropoda</taxon>
        <taxon>Chelicerata</taxon>
        <taxon>Arachnida</taxon>
        <taxon>Araneae</taxon>
        <taxon>Araneomorphae</taxon>
        <taxon>Entelegynae</taxon>
        <taxon>Dionycha</taxon>
        <taxon>Thomisidae</taxon>
        <taxon>Heriaeus</taxon>
    </lineage>
</organism>
<proteinExistence type="evidence at protein level"/>
<dbReference type="SMR" id="P85506"/>
<dbReference type="ArachnoServer" id="AS000760">
    <property type="toxin name" value="mu-thomitoxin-Hme1b"/>
</dbReference>
<dbReference type="GO" id="GO:0005576">
    <property type="term" value="C:extracellular region"/>
    <property type="evidence" value="ECO:0007669"/>
    <property type="project" value="UniProtKB-SubCell"/>
</dbReference>
<dbReference type="GO" id="GO:0017080">
    <property type="term" value="F:sodium channel regulator activity"/>
    <property type="evidence" value="ECO:0007669"/>
    <property type="project" value="UniProtKB-KW"/>
</dbReference>
<dbReference type="GO" id="GO:0090729">
    <property type="term" value="F:toxin activity"/>
    <property type="evidence" value="ECO:0007669"/>
    <property type="project" value="UniProtKB-KW"/>
</dbReference>
<protein>
    <recommendedName>
        <fullName evidence="5">Mu-thomitoxin-Hme1b</fullName>
        <shortName evidence="5">Mu-TMTX-Hme1b</shortName>
    </recommendedName>
    <alternativeName>
        <fullName evidence="4">Neurotoxin Hm-2</fullName>
    </alternativeName>
</protein>
<sequence>GCIPSFGECAWFSGESCCTGICKWVFFTSKFMCRRVWGKD</sequence>
<feature type="peptide" id="PRO_0000352651" description="Mu-thomitoxin-Hme1b">
    <location>
        <begin position="1"/>
        <end position="40"/>
    </location>
</feature>
<feature type="disulfide bond" evidence="1">
    <location>
        <begin position="2"/>
        <end position="18"/>
    </location>
</feature>
<feature type="disulfide bond" evidence="1">
    <location>
        <begin position="9"/>
        <end position="22"/>
    </location>
</feature>
<feature type="disulfide bond" evidence="1">
    <location>
        <begin position="17"/>
        <end position="33"/>
    </location>
</feature>
<reference key="1">
    <citation type="journal article" date="2008" name="Toxicon">
        <title>Two novel sodium channel inhibitors from Heriaeus melloteei spider venom differentially interacting with mammalian channel's isoforms.</title>
        <authorList>
            <person name="Billen B."/>
            <person name="Vassilevski A."/>
            <person name="Nikolsky A."/>
            <person name="Tytgat J."/>
            <person name="Grishin E."/>
        </authorList>
    </citation>
    <scope>PROTEIN SEQUENCE</scope>
    <scope>FUNCTION</scope>
    <scope>DISULFIDE BONDS</scope>
    <scope>MASS SPECTROMETRY</scope>
    <source>
        <tissue>Venom</tissue>
    </source>
</reference>
<reference key="2">
    <citation type="journal article" date="2009" name="Biochemistry (Mosc.) Suppl. Series A">
        <title>Voltage-gated sodium channels are targets for toxins from the venom of the spider Heriaeus melloteei.</title>
        <authorList>
            <person name="Nikolsky A."/>
            <person name="Billen B."/>
            <person name="Vassilevski A."/>
            <person name="Filkin S."/>
            <person name="Tytgat J."/>
            <person name="Grishin E."/>
        </authorList>
    </citation>
    <scope>PROTEIN SEQUENCE</scope>
    <scope>FUNCTION</scope>
    <scope>DISULFIDE BONDS</scope>
    <scope>MASS SPECTROMETRY</scope>
    <source>
        <tissue>Venom</tissue>
    </source>
</reference>